<organism>
    <name type="scientific">Mus musculus</name>
    <name type="common">Mouse</name>
    <dbReference type="NCBI Taxonomy" id="10090"/>
    <lineage>
        <taxon>Eukaryota</taxon>
        <taxon>Metazoa</taxon>
        <taxon>Chordata</taxon>
        <taxon>Craniata</taxon>
        <taxon>Vertebrata</taxon>
        <taxon>Euteleostomi</taxon>
        <taxon>Mammalia</taxon>
        <taxon>Eutheria</taxon>
        <taxon>Euarchontoglires</taxon>
        <taxon>Glires</taxon>
        <taxon>Rodentia</taxon>
        <taxon>Myomorpha</taxon>
        <taxon>Muroidea</taxon>
        <taxon>Muridae</taxon>
        <taxon>Murinae</taxon>
        <taxon>Mus</taxon>
        <taxon>Mus</taxon>
    </lineage>
</organism>
<dbReference type="EC" id="6.3.5.-" evidence="1"/>
<dbReference type="EMBL" id="AK008080">
    <property type="protein sequence ID" value="BAB25446.1"/>
    <property type="molecule type" value="mRNA"/>
</dbReference>
<dbReference type="EMBL" id="AK034326">
    <property type="protein sequence ID" value="BAC28675.1"/>
    <property type="molecule type" value="mRNA"/>
</dbReference>
<dbReference type="EMBL" id="BC021775">
    <property type="protein sequence ID" value="AAH21775.1"/>
    <property type="molecule type" value="mRNA"/>
</dbReference>
<dbReference type="CCDS" id="CCDS19588.1"/>
<dbReference type="RefSeq" id="NP_083921.1">
    <property type="nucleotide sequence ID" value="NM_029645.3"/>
</dbReference>
<dbReference type="SMR" id="Q8CBY0"/>
<dbReference type="BioGRID" id="239110">
    <property type="interactions" value="2"/>
</dbReference>
<dbReference type="FunCoup" id="Q8CBY0">
    <property type="interactions" value="1223"/>
</dbReference>
<dbReference type="STRING" id="10090.ENSMUSP00000115090"/>
<dbReference type="iPTMnet" id="Q8CBY0"/>
<dbReference type="PhosphoSitePlus" id="Q8CBY0"/>
<dbReference type="PaxDb" id="10090-ENSMUSP00000115090"/>
<dbReference type="PeptideAtlas" id="Q8CBY0"/>
<dbReference type="ProteomicsDB" id="271672"/>
<dbReference type="Pumba" id="Q8CBY0"/>
<dbReference type="Antibodypedia" id="56388">
    <property type="antibodies" value="55 antibodies from 18 providers"/>
</dbReference>
<dbReference type="DNASU" id="384281"/>
<dbReference type="Ensembl" id="ENSMUST00000139167.3">
    <property type="protein sequence ID" value="ENSMUSP00000115090.2"/>
    <property type="gene ID" value="ENSMUSG00000029536.9"/>
</dbReference>
<dbReference type="GeneID" id="384281"/>
<dbReference type="KEGG" id="mmu:384281"/>
<dbReference type="UCSC" id="uc008zdr.1">
    <property type="organism name" value="mouse"/>
</dbReference>
<dbReference type="AGR" id="MGI:1923776"/>
<dbReference type="CTD" id="283459"/>
<dbReference type="MGI" id="MGI:1923776">
    <property type="gene designation" value="Gatc"/>
</dbReference>
<dbReference type="VEuPathDB" id="HostDB:ENSMUSG00000029536"/>
<dbReference type="eggNOG" id="KOG4247">
    <property type="taxonomic scope" value="Eukaryota"/>
</dbReference>
<dbReference type="GeneTree" id="ENSGT00390000018351"/>
<dbReference type="HOGENOM" id="CLU_105899_0_2_1"/>
<dbReference type="InParanoid" id="Q8CBY0"/>
<dbReference type="OMA" id="WPNISAF"/>
<dbReference type="OrthoDB" id="5394539at2759"/>
<dbReference type="PhylomeDB" id="Q8CBY0"/>
<dbReference type="TreeFam" id="TF106133"/>
<dbReference type="BioGRID-ORCS" id="384281">
    <property type="hits" value="21 hits in 79 CRISPR screens"/>
</dbReference>
<dbReference type="ChiTaRS" id="Gatc">
    <property type="organism name" value="mouse"/>
</dbReference>
<dbReference type="PRO" id="PR:Q8CBY0"/>
<dbReference type="Proteomes" id="UP000000589">
    <property type="component" value="Chromosome 5"/>
</dbReference>
<dbReference type="RNAct" id="Q8CBY0">
    <property type="molecule type" value="protein"/>
</dbReference>
<dbReference type="Bgee" id="ENSMUSG00000029536">
    <property type="expression patterns" value="Expressed in retinal neural layer and 229 other cell types or tissues"/>
</dbReference>
<dbReference type="GO" id="GO:0030956">
    <property type="term" value="C:glutamyl-tRNA(Gln) amidotransferase complex"/>
    <property type="evidence" value="ECO:0007669"/>
    <property type="project" value="UniProtKB-UniRule"/>
</dbReference>
<dbReference type="GO" id="GO:0005739">
    <property type="term" value="C:mitochondrion"/>
    <property type="evidence" value="ECO:0000314"/>
    <property type="project" value="MGI"/>
</dbReference>
<dbReference type="GO" id="GO:0005524">
    <property type="term" value="F:ATP binding"/>
    <property type="evidence" value="ECO:0007669"/>
    <property type="project" value="UniProtKB-KW"/>
</dbReference>
<dbReference type="GO" id="GO:0050567">
    <property type="term" value="F:glutaminyl-tRNA synthase (glutamine-hydrolyzing) activity"/>
    <property type="evidence" value="ECO:0007669"/>
    <property type="project" value="UniProtKB-UniRule"/>
</dbReference>
<dbReference type="GO" id="GO:0070681">
    <property type="term" value="P:glutaminyl-tRNAGln biosynthesis via transamidation"/>
    <property type="evidence" value="ECO:0007669"/>
    <property type="project" value="UniProtKB-UniRule"/>
</dbReference>
<dbReference type="GO" id="GO:0032543">
    <property type="term" value="P:mitochondrial translation"/>
    <property type="evidence" value="ECO:0007669"/>
    <property type="project" value="UniProtKB-UniRule"/>
</dbReference>
<dbReference type="GO" id="GO:0006450">
    <property type="term" value="P:regulation of translational fidelity"/>
    <property type="evidence" value="ECO:0007669"/>
    <property type="project" value="InterPro"/>
</dbReference>
<dbReference type="HAMAP" id="MF_00122">
    <property type="entry name" value="GatC"/>
    <property type="match status" value="1"/>
</dbReference>
<dbReference type="InterPro" id="IPR036113">
    <property type="entry name" value="Asp/Glu-ADT_sf_sub_c"/>
</dbReference>
<dbReference type="InterPro" id="IPR003837">
    <property type="entry name" value="GatC"/>
</dbReference>
<dbReference type="NCBIfam" id="TIGR00135">
    <property type="entry name" value="gatC"/>
    <property type="match status" value="1"/>
</dbReference>
<dbReference type="PANTHER" id="PTHR15004">
    <property type="entry name" value="GLUTAMYL-TRNA(GLN) AMIDOTRANSFERASE SUBUNIT C, MITOCHONDRIAL"/>
    <property type="match status" value="1"/>
</dbReference>
<dbReference type="PANTHER" id="PTHR15004:SF0">
    <property type="entry name" value="GLUTAMYL-TRNA(GLN) AMIDOTRANSFERASE SUBUNIT C, MITOCHONDRIAL"/>
    <property type="match status" value="1"/>
</dbReference>
<dbReference type="Pfam" id="PF02686">
    <property type="entry name" value="GatC"/>
    <property type="match status" value="1"/>
</dbReference>
<dbReference type="SUPFAM" id="SSF141000">
    <property type="entry name" value="Glu-tRNAGln amidotransferase C subunit"/>
    <property type="match status" value="1"/>
</dbReference>
<reference key="1">
    <citation type="journal article" date="2005" name="Science">
        <title>The transcriptional landscape of the mammalian genome.</title>
        <authorList>
            <person name="Carninci P."/>
            <person name="Kasukawa T."/>
            <person name="Katayama S."/>
            <person name="Gough J."/>
            <person name="Frith M.C."/>
            <person name="Maeda N."/>
            <person name="Oyama R."/>
            <person name="Ravasi T."/>
            <person name="Lenhard B."/>
            <person name="Wells C."/>
            <person name="Kodzius R."/>
            <person name="Shimokawa K."/>
            <person name="Bajic V.B."/>
            <person name="Brenner S.E."/>
            <person name="Batalov S."/>
            <person name="Forrest A.R."/>
            <person name="Zavolan M."/>
            <person name="Davis M.J."/>
            <person name="Wilming L.G."/>
            <person name="Aidinis V."/>
            <person name="Allen J.E."/>
            <person name="Ambesi-Impiombato A."/>
            <person name="Apweiler R."/>
            <person name="Aturaliya R.N."/>
            <person name="Bailey T.L."/>
            <person name="Bansal M."/>
            <person name="Baxter L."/>
            <person name="Beisel K.W."/>
            <person name="Bersano T."/>
            <person name="Bono H."/>
            <person name="Chalk A.M."/>
            <person name="Chiu K.P."/>
            <person name="Choudhary V."/>
            <person name="Christoffels A."/>
            <person name="Clutterbuck D.R."/>
            <person name="Crowe M.L."/>
            <person name="Dalla E."/>
            <person name="Dalrymple B.P."/>
            <person name="de Bono B."/>
            <person name="Della Gatta G."/>
            <person name="di Bernardo D."/>
            <person name="Down T."/>
            <person name="Engstrom P."/>
            <person name="Fagiolini M."/>
            <person name="Faulkner G."/>
            <person name="Fletcher C.F."/>
            <person name="Fukushima T."/>
            <person name="Furuno M."/>
            <person name="Futaki S."/>
            <person name="Gariboldi M."/>
            <person name="Georgii-Hemming P."/>
            <person name="Gingeras T.R."/>
            <person name="Gojobori T."/>
            <person name="Green R.E."/>
            <person name="Gustincich S."/>
            <person name="Harbers M."/>
            <person name="Hayashi Y."/>
            <person name="Hensch T.K."/>
            <person name="Hirokawa N."/>
            <person name="Hill D."/>
            <person name="Huminiecki L."/>
            <person name="Iacono M."/>
            <person name="Ikeo K."/>
            <person name="Iwama A."/>
            <person name="Ishikawa T."/>
            <person name="Jakt M."/>
            <person name="Kanapin A."/>
            <person name="Katoh M."/>
            <person name="Kawasawa Y."/>
            <person name="Kelso J."/>
            <person name="Kitamura H."/>
            <person name="Kitano H."/>
            <person name="Kollias G."/>
            <person name="Krishnan S.P."/>
            <person name="Kruger A."/>
            <person name="Kummerfeld S.K."/>
            <person name="Kurochkin I.V."/>
            <person name="Lareau L.F."/>
            <person name="Lazarevic D."/>
            <person name="Lipovich L."/>
            <person name="Liu J."/>
            <person name="Liuni S."/>
            <person name="McWilliam S."/>
            <person name="Madan Babu M."/>
            <person name="Madera M."/>
            <person name="Marchionni L."/>
            <person name="Matsuda H."/>
            <person name="Matsuzawa S."/>
            <person name="Miki H."/>
            <person name="Mignone F."/>
            <person name="Miyake S."/>
            <person name="Morris K."/>
            <person name="Mottagui-Tabar S."/>
            <person name="Mulder N."/>
            <person name="Nakano N."/>
            <person name="Nakauchi H."/>
            <person name="Ng P."/>
            <person name="Nilsson R."/>
            <person name="Nishiguchi S."/>
            <person name="Nishikawa S."/>
            <person name="Nori F."/>
            <person name="Ohara O."/>
            <person name="Okazaki Y."/>
            <person name="Orlando V."/>
            <person name="Pang K.C."/>
            <person name="Pavan W.J."/>
            <person name="Pavesi G."/>
            <person name="Pesole G."/>
            <person name="Petrovsky N."/>
            <person name="Piazza S."/>
            <person name="Reed J."/>
            <person name="Reid J.F."/>
            <person name="Ring B.Z."/>
            <person name="Ringwald M."/>
            <person name="Rost B."/>
            <person name="Ruan Y."/>
            <person name="Salzberg S.L."/>
            <person name="Sandelin A."/>
            <person name="Schneider C."/>
            <person name="Schoenbach C."/>
            <person name="Sekiguchi K."/>
            <person name="Semple C.A."/>
            <person name="Seno S."/>
            <person name="Sessa L."/>
            <person name="Sheng Y."/>
            <person name="Shibata Y."/>
            <person name="Shimada H."/>
            <person name="Shimada K."/>
            <person name="Silva D."/>
            <person name="Sinclair B."/>
            <person name="Sperling S."/>
            <person name="Stupka E."/>
            <person name="Sugiura K."/>
            <person name="Sultana R."/>
            <person name="Takenaka Y."/>
            <person name="Taki K."/>
            <person name="Tammoja K."/>
            <person name="Tan S.L."/>
            <person name="Tang S."/>
            <person name="Taylor M.S."/>
            <person name="Tegner J."/>
            <person name="Teichmann S.A."/>
            <person name="Ueda H.R."/>
            <person name="van Nimwegen E."/>
            <person name="Verardo R."/>
            <person name="Wei C.L."/>
            <person name="Yagi K."/>
            <person name="Yamanishi H."/>
            <person name="Zabarovsky E."/>
            <person name="Zhu S."/>
            <person name="Zimmer A."/>
            <person name="Hide W."/>
            <person name="Bult C."/>
            <person name="Grimmond S.M."/>
            <person name="Teasdale R.D."/>
            <person name="Liu E.T."/>
            <person name="Brusic V."/>
            <person name="Quackenbush J."/>
            <person name="Wahlestedt C."/>
            <person name="Mattick J.S."/>
            <person name="Hume D.A."/>
            <person name="Kai C."/>
            <person name="Sasaki D."/>
            <person name="Tomaru Y."/>
            <person name="Fukuda S."/>
            <person name="Kanamori-Katayama M."/>
            <person name="Suzuki M."/>
            <person name="Aoki J."/>
            <person name="Arakawa T."/>
            <person name="Iida J."/>
            <person name="Imamura K."/>
            <person name="Itoh M."/>
            <person name="Kato T."/>
            <person name="Kawaji H."/>
            <person name="Kawagashira N."/>
            <person name="Kawashima T."/>
            <person name="Kojima M."/>
            <person name="Kondo S."/>
            <person name="Konno H."/>
            <person name="Nakano K."/>
            <person name="Ninomiya N."/>
            <person name="Nishio T."/>
            <person name="Okada M."/>
            <person name="Plessy C."/>
            <person name="Shibata K."/>
            <person name="Shiraki T."/>
            <person name="Suzuki S."/>
            <person name="Tagami M."/>
            <person name="Waki K."/>
            <person name="Watahiki A."/>
            <person name="Okamura-Oho Y."/>
            <person name="Suzuki H."/>
            <person name="Kawai J."/>
            <person name="Hayashizaki Y."/>
        </authorList>
    </citation>
    <scope>NUCLEOTIDE SEQUENCE [LARGE SCALE MRNA]</scope>
    <source>
        <strain>C57BL/6J</strain>
        <tissue>Diencephalon</tissue>
        <tissue>Small intestine</tissue>
    </source>
</reference>
<reference key="2">
    <citation type="journal article" date="2004" name="Genome Res.">
        <title>The status, quality, and expansion of the NIH full-length cDNA project: the Mammalian Gene Collection (MGC).</title>
        <authorList>
            <consortium name="The MGC Project Team"/>
        </authorList>
    </citation>
    <scope>NUCLEOTIDE SEQUENCE [LARGE SCALE MRNA]</scope>
    <source>
        <strain>FVB/N</strain>
        <tissue>Liver</tissue>
    </source>
</reference>
<reference key="3">
    <citation type="journal article" date="2010" name="Cell">
        <title>A tissue-specific atlas of mouse protein phosphorylation and expression.</title>
        <authorList>
            <person name="Huttlin E.L."/>
            <person name="Jedrychowski M.P."/>
            <person name="Elias J.E."/>
            <person name="Goswami T."/>
            <person name="Rad R."/>
            <person name="Beausoleil S.A."/>
            <person name="Villen J."/>
            <person name="Haas W."/>
            <person name="Sowa M.E."/>
            <person name="Gygi S.P."/>
        </authorList>
    </citation>
    <scope>IDENTIFICATION BY MASS SPECTROMETRY [LARGE SCALE ANALYSIS]</scope>
    <source>
        <tissue>Brain</tissue>
        <tissue>Brown adipose tissue</tissue>
        <tissue>Heart</tissue>
        <tissue>Kidney</tissue>
        <tissue>Liver</tissue>
        <tissue>Testis</tissue>
    </source>
</reference>
<gene>
    <name type="primary">Gatc</name>
</gene>
<proteinExistence type="evidence at protein level"/>
<evidence type="ECO:0000255" key="1">
    <source>
        <dbReference type="HAMAP-Rule" id="MF_03149"/>
    </source>
</evidence>
<evidence type="ECO:0000305" key="2"/>
<accession>Q8CBY0</accession>
<accession>Q8VC59</accession>
<accession>Q9D8F4</accession>
<comment type="function">
    <text evidence="1">Allows the formation of correctly charged Gln-tRNA(Gln) through the transamidation of misacylated Glu-tRNA(Gln) in the mitochondria. The reaction takes place in the presence of glutamine and ATP through an activated gamma-phospho-Glu-tRNA(Gln).</text>
</comment>
<comment type="catalytic activity">
    <reaction evidence="1">
        <text>L-glutamyl-tRNA(Gln) + L-glutamine + ATP + H2O = L-glutaminyl-tRNA(Gln) + L-glutamate + ADP + phosphate + H(+)</text>
        <dbReference type="Rhea" id="RHEA:17521"/>
        <dbReference type="Rhea" id="RHEA-COMP:9681"/>
        <dbReference type="Rhea" id="RHEA-COMP:9684"/>
        <dbReference type="ChEBI" id="CHEBI:15377"/>
        <dbReference type="ChEBI" id="CHEBI:15378"/>
        <dbReference type="ChEBI" id="CHEBI:29985"/>
        <dbReference type="ChEBI" id="CHEBI:30616"/>
        <dbReference type="ChEBI" id="CHEBI:43474"/>
        <dbReference type="ChEBI" id="CHEBI:58359"/>
        <dbReference type="ChEBI" id="CHEBI:78520"/>
        <dbReference type="ChEBI" id="CHEBI:78521"/>
        <dbReference type="ChEBI" id="CHEBI:456216"/>
    </reaction>
</comment>
<comment type="subunit">
    <text evidence="1">Subunit of the heterotrimeric GatCAB amidotransferase (AdT) complex, composed of A (QRSL1), B (GATB) and C (GATC) subunits.</text>
</comment>
<comment type="subcellular location">
    <subcellularLocation>
        <location evidence="1">Mitochondrion</location>
    </subcellularLocation>
</comment>
<comment type="similarity">
    <text evidence="1">Belongs to the GatC family.</text>
</comment>
<sequence>MWSRAASVRFRAPLDAGRSFASKANPQGKVQAAGLGTQAPRLVPQGSGRVSPAVIEHLERLALVNFGSREAVDRLEKAIAFADQLHAVDTDGVEPLESVLEDRCLYLRSDNVAEGSCAEELLQNSNHVVEEYFVAPPGNISLPDMVNKIPSSTAE</sequence>
<feature type="transit peptide" description="Mitochondrion" evidence="1">
    <location>
        <begin position="1"/>
        <end position="20"/>
    </location>
</feature>
<feature type="chain" id="PRO_0000290035" description="Glutamyl-tRNA(Gln) amidotransferase subunit C, mitochondrial">
    <location>
        <begin position="21"/>
        <end position="155"/>
    </location>
</feature>
<feature type="sequence conflict" description="In Ref. 2; AAH21775." evidence="2" ref="2">
    <original>R</original>
    <variation>G</variation>
    <location>
        <position position="74"/>
    </location>
</feature>
<feature type="sequence conflict" description="In Ref. 1; BAB25446." evidence="2" ref="1">
    <original>E</original>
    <variation>K</variation>
    <location>
        <position position="97"/>
    </location>
</feature>
<feature type="sequence conflict" description="In Ref. 1; BAB25446." evidence="2" ref="1">
    <original>E</original>
    <variation>K</variation>
    <location>
        <position position="114"/>
    </location>
</feature>
<feature type="sequence conflict" description="In Ref. 1; BAB25446." evidence="2" ref="1">
    <original>E</original>
    <variation>K</variation>
    <location>
        <position position="120"/>
    </location>
</feature>
<feature type="sequence conflict" description="In Ref. 2; AAH21775." evidence="2" ref="2">
    <original>A</original>
    <variation>V</variation>
    <location>
        <position position="154"/>
    </location>
</feature>
<name>GATC_MOUSE</name>
<keyword id="KW-0067">ATP-binding</keyword>
<keyword id="KW-0436">Ligase</keyword>
<keyword id="KW-0496">Mitochondrion</keyword>
<keyword id="KW-0547">Nucleotide-binding</keyword>
<keyword id="KW-0648">Protein biosynthesis</keyword>
<keyword id="KW-1185">Reference proteome</keyword>
<keyword id="KW-0809">Transit peptide</keyword>
<protein>
    <recommendedName>
        <fullName evidence="1">Glutamyl-tRNA(Gln) amidotransferase subunit C, mitochondrial</fullName>
        <shortName evidence="1">Glu-AdT subunit C</shortName>
        <ecNumber evidence="1">6.3.5.-</ecNumber>
    </recommendedName>
</protein>